<reference key="1">
    <citation type="journal article" date="2008" name="J. Bacteriol.">
        <title>Insights into the environmental resistance gene pool from the genome sequence of the multidrug-resistant environmental isolate Escherichia coli SMS-3-5.</title>
        <authorList>
            <person name="Fricke W.F."/>
            <person name="Wright M.S."/>
            <person name="Lindell A.H."/>
            <person name="Harkins D.M."/>
            <person name="Baker-Austin C."/>
            <person name="Ravel J."/>
            <person name="Stepanauskas R."/>
        </authorList>
    </citation>
    <scope>NUCLEOTIDE SEQUENCE [LARGE SCALE GENOMIC DNA]</scope>
    <source>
        <strain>SMS-3-5 / SECEC</strain>
    </source>
</reference>
<organism>
    <name type="scientific">Escherichia coli (strain SMS-3-5 / SECEC)</name>
    <dbReference type="NCBI Taxonomy" id="439855"/>
    <lineage>
        <taxon>Bacteria</taxon>
        <taxon>Pseudomonadati</taxon>
        <taxon>Pseudomonadota</taxon>
        <taxon>Gammaproteobacteria</taxon>
        <taxon>Enterobacterales</taxon>
        <taxon>Enterobacteriaceae</taxon>
        <taxon>Escherichia</taxon>
    </lineage>
</organism>
<keyword id="KW-0131">Cell cycle</keyword>
<keyword id="KW-0132">Cell division</keyword>
<keyword id="KW-0175">Coiled coil</keyword>
<keyword id="KW-0963">Cytoplasm</keyword>
<keyword id="KW-0238">DNA-binding</keyword>
<feature type="chain" id="PRO_1000188388" description="Nucleoid occlusion factor SlmA">
    <location>
        <begin position="1"/>
        <end position="198"/>
    </location>
</feature>
<feature type="domain" description="HTH tetR-type" evidence="1">
    <location>
        <begin position="10"/>
        <end position="70"/>
    </location>
</feature>
<feature type="DNA-binding region" description="H-T-H motif" evidence="1">
    <location>
        <begin position="33"/>
        <end position="52"/>
    </location>
</feature>
<feature type="coiled-coil region" evidence="1">
    <location>
        <begin position="117"/>
        <end position="144"/>
    </location>
</feature>
<comment type="function">
    <text evidence="1">Required for nucleoid occlusion (NO) phenomenon, which prevents Z-ring formation and cell division over the nucleoid. Acts as a DNA-associated cell division inhibitor that binds simultaneously chromosomal DNA and FtsZ, and disrupts the assembly of FtsZ polymers. SlmA-DNA-binding sequences (SBS) are dispersed on non-Ter regions of the chromosome, preventing FtsZ polymerization at these regions.</text>
</comment>
<comment type="subunit">
    <text evidence="1">Homodimer. Interacts with FtsZ.</text>
</comment>
<comment type="subcellular location">
    <subcellularLocation>
        <location evidence="1">Cytoplasm</location>
        <location evidence="1">Nucleoid</location>
    </subcellularLocation>
</comment>
<comment type="similarity">
    <text evidence="1">Belongs to the nucleoid occlusion factor SlmA family.</text>
</comment>
<accession>B1LK78</accession>
<gene>
    <name evidence="1" type="primary">slmA</name>
    <name type="ordered locus">EcSMS35_3976</name>
</gene>
<dbReference type="EMBL" id="CP000970">
    <property type="protein sequence ID" value="ACB20012.1"/>
    <property type="molecule type" value="Genomic_DNA"/>
</dbReference>
<dbReference type="RefSeq" id="WP_000818598.1">
    <property type="nucleotide sequence ID" value="NC_010498.1"/>
</dbReference>
<dbReference type="SMR" id="B1LK78"/>
<dbReference type="KEGG" id="ecm:EcSMS35_3976"/>
<dbReference type="HOGENOM" id="CLU_069356_5_0_6"/>
<dbReference type="Proteomes" id="UP000007011">
    <property type="component" value="Chromosome"/>
</dbReference>
<dbReference type="GO" id="GO:0043590">
    <property type="term" value="C:bacterial nucleoid"/>
    <property type="evidence" value="ECO:0007669"/>
    <property type="project" value="UniProtKB-UniRule"/>
</dbReference>
<dbReference type="GO" id="GO:0005737">
    <property type="term" value="C:cytoplasm"/>
    <property type="evidence" value="ECO:0007669"/>
    <property type="project" value="UniProtKB-UniRule"/>
</dbReference>
<dbReference type="GO" id="GO:0003700">
    <property type="term" value="F:DNA-binding transcription factor activity"/>
    <property type="evidence" value="ECO:0007669"/>
    <property type="project" value="TreeGrafter"/>
</dbReference>
<dbReference type="GO" id="GO:0000976">
    <property type="term" value="F:transcription cis-regulatory region binding"/>
    <property type="evidence" value="ECO:0007669"/>
    <property type="project" value="TreeGrafter"/>
</dbReference>
<dbReference type="GO" id="GO:0051301">
    <property type="term" value="P:cell division"/>
    <property type="evidence" value="ECO:0007669"/>
    <property type="project" value="UniProtKB-KW"/>
</dbReference>
<dbReference type="GO" id="GO:0010974">
    <property type="term" value="P:negative regulation of division septum assembly"/>
    <property type="evidence" value="ECO:0007669"/>
    <property type="project" value="InterPro"/>
</dbReference>
<dbReference type="FunFam" id="1.10.357.10:FF:000002">
    <property type="entry name" value="Nucleoid occlusion factor SlmA"/>
    <property type="match status" value="1"/>
</dbReference>
<dbReference type="Gene3D" id="1.10.357.10">
    <property type="entry name" value="Tetracycline Repressor, domain 2"/>
    <property type="match status" value="1"/>
</dbReference>
<dbReference type="HAMAP" id="MF_01839">
    <property type="entry name" value="NO_factor_SlmA"/>
    <property type="match status" value="1"/>
</dbReference>
<dbReference type="InterPro" id="IPR023772">
    <property type="entry name" value="DNA-bd_HTH_TetR-type_CS"/>
</dbReference>
<dbReference type="InterPro" id="IPR009057">
    <property type="entry name" value="Homeodomain-like_sf"/>
</dbReference>
<dbReference type="InterPro" id="IPR050109">
    <property type="entry name" value="HTH-type_TetR-like_transc_reg"/>
</dbReference>
<dbReference type="InterPro" id="IPR001647">
    <property type="entry name" value="HTH_TetR"/>
</dbReference>
<dbReference type="InterPro" id="IPR023769">
    <property type="entry name" value="NO_SlmA"/>
</dbReference>
<dbReference type="InterPro" id="IPR054580">
    <property type="entry name" value="SlmA-like_C"/>
</dbReference>
<dbReference type="InterPro" id="IPR036271">
    <property type="entry name" value="Tet_transcr_reg_TetR-rel_C_sf"/>
</dbReference>
<dbReference type="NCBIfam" id="NF007015">
    <property type="entry name" value="PRK09480.1"/>
    <property type="match status" value="1"/>
</dbReference>
<dbReference type="PANTHER" id="PTHR30055">
    <property type="entry name" value="HTH-TYPE TRANSCRIPTIONAL REGULATOR RUTR"/>
    <property type="match status" value="1"/>
</dbReference>
<dbReference type="PANTHER" id="PTHR30055:SF183">
    <property type="entry name" value="NUCLEOID OCCLUSION FACTOR SLMA"/>
    <property type="match status" value="1"/>
</dbReference>
<dbReference type="Pfam" id="PF22276">
    <property type="entry name" value="SlmA-like_C"/>
    <property type="match status" value="1"/>
</dbReference>
<dbReference type="Pfam" id="PF00440">
    <property type="entry name" value="TetR_N"/>
    <property type="match status" value="1"/>
</dbReference>
<dbReference type="SUPFAM" id="SSF46689">
    <property type="entry name" value="Homeodomain-like"/>
    <property type="match status" value="1"/>
</dbReference>
<dbReference type="SUPFAM" id="SSF48498">
    <property type="entry name" value="Tetracyclin repressor-like, C-terminal domain"/>
    <property type="match status" value="1"/>
</dbReference>
<dbReference type="PROSITE" id="PS01081">
    <property type="entry name" value="HTH_TETR_1"/>
    <property type="match status" value="1"/>
</dbReference>
<dbReference type="PROSITE" id="PS50977">
    <property type="entry name" value="HTH_TETR_2"/>
    <property type="match status" value="1"/>
</dbReference>
<evidence type="ECO:0000255" key="1">
    <source>
        <dbReference type="HAMAP-Rule" id="MF_01839"/>
    </source>
</evidence>
<name>SLMA_ECOSM</name>
<sequence>MAEKQTAKRNRREEILQSLALMLESSDGSQRITTAKLAASVGVSEAALYRHFPSKTRMFDSLIEFIEDSLITRINLILKDEKDTTARLRLIVLLLLGFGERNPGLTRILTGHALMFEQDRLQGRINQLFERIEAQLRQVLREKRMREGEGYATDETLLASQILAFCEGMLSRFVRSEFKYRPTDDFDARWPLIAAQLQ</sequence>
<proteinExistence type="inferred from homology"/>
<protein>
    <recommendedName>
        <fullName evidence="1">Nucleoid occlusion factor SlmA</fullName>
    </recommendedName>
</protein>